<feature type="chain" id="PRO_1000050174" description="4-hydroxy-tetrahydrodipicolinate synthase">
    <location>
        <begin position="1"/>
        <end position="290"/>
    </location>
</feature>
<feature type="active site" description="Proton donor/acceptor" evidence="1">
    <location>
        <position position="129"/>
    </location>
</feature>
<feature type="active site" description="Schiff-base intermediate with substrate" evidence="1">
    <location>
        <position position="157"/>
    </location>
</feature>
<feature type="binding site" evidence="1">
    <location>
        <position position="42"/>
    </location>
    <ligand>
        <name>pyruvate</name>
        <dbReference type="ChEBI" id="CHEBI:15361"/>
    </ligand>
</feature>
<feature type="binding site" evidence="1">
    <location>
        <position position="198"/>
    </location>
    <ligand>
        <name>pyruvate</name>
        <dbReference type="ChEBI" id="CHEBI:15361"/>
    </ligand>
</feature>
<feature type="site" description="Part of a proton relay during catalysis" evidence="1">
    <location>
        <position position="41"/>
    </location>
</feature>
<feature type="site" description="Part of a proton relay during catalysis" evidence="1">
    <location>
        <position position="103"/>
    </location>
</feature>
<reference key="1">
    <citation type="journal article" date="2006" name="DNA Res.">
        <title>Genome sequence of the cat pathogen, Chlamydophila felis.</title>
        <authorList>
            <person name="Azuma Y."/>
            <person name="Hirakawa H."/>
            <person name="Yamashita A."/>
            <person name="Cai Y."/>
            <person name="Rahman M.A."/>
            <person name="Suzuki H."/>
            <person name="Mitaku S."/>
            <person name="Toh H."/>
            <person name="Goto S."/>
            <person name="Murakami T."/>
            <person name="Sugi K."/>
            <person name="Hayashi H."/>
            <person name="Fukushi H."/>
            <person name="Hattori M."/>
            <person name="Kuhara S."/>
            <person name="Shirai M."/>
        </authorList>
    </citation>
    <scope>NUCLEOTIDE SEQUENCE [LARGE SCALE GENOMIC DNA]</scope>
    <source>
        <strain>Fe/C-56</strain>
    </source>
</reference>
<evidence type="ECO:0000255" key="1">
    <source>
        <dbReference type="HAMAP-Rule" id="MF_00418"/>
    </source>
</evidence>
<evidence type="ECO:0000305" key="2"/>
<sequence length="290" mass="32314">MKLLTASVTPFLPNYDIDFLSVEKLLHSQEKEGNGVVLLGSTGESLALTVQEKEKLVAYACSLDLKIPIIVGVPGTSLHEASAWVSLCQSYPVDGFLITSPIYTKPGIQGQILWFESILNITNKPAILYNIPSRAGSPIYLETVRALSGHPFFYGIKDSGGSIDRCREYTQVCPNLIIYCGDDGLWPQMHQCGARGLISVLSNSWPKEAHNYVEDPFNKNNSLLWCELVSWINQTTNPISIKAMLAYKQDIAYDILRLPLSIKDLQNKKVLPVLVEKMSQWSQICECVFT</sequence>
<comment type="function">
    <text evidence="1">Catalyzes the condensation of (S)-aspartate-beta-semialdehyde [(S)-ASA] and pyruvate to 4-hydroxy-tetrahydrodipicolinate (HTPA).</text>
</comment>
<comment type="catalytic activity">
    <reaction evidence="1">
        <text>L-aspartate 4-semialdehyde + pyruvate = (2S,4S)-4-hydroxy-2,3,4,5-tetrahydrodipicolinate + H2O + H(+)</text>
        <dbReference type="Rhea" id="RHEA:34171"/>
        <dbReference type="ChEBI" id="CHEBI:15361"/>
        <dbReference type="ChEBI" id="CHEBI:15377"/>
        <dbReference type="ChEBI" id="CHEBI:15378"/>
        <dbReference type="ChEBI" id="CHEBI:67139"/>
        <dbReference type="ChEBI" id="CHEBI:537519"/>
        <dbReference type="EC" id="4.3.3.7"/>
    </reaction>
</comment>
<comment type="pathway">
    <text evidence="1">Amino-acid biosynthesis; L-lysine biosynthesis via DAP pathway; (S)-tetrahydrodipicolinate from L-aspartate: step 3/4.</text>
</comment>
<comment type="subunit">
    <text evidence="1">Homotetramer; dimer of dimers.</text>
</comment>
<comment type="subcellular location">
    <subcellularLocation>
        <location evidence="1">Cytoplasm</location>
    </subcellularLocation>
</comment>
<comment type="similarity">
    <text evidence="1">Belongs to the DapA family.</text>
</comment>
<comment type="caution">
    <text evidence="2">Was originally thought to be a dihydrodipicolinate synthase (DHDPS), catalyzing the condensation of (S)-aspartate-beta-semialdehyde [(S)-ASA] and pyruvate to dihydrodipicolinate (DHDP). However, it was shown in E.coli that the product of the enzymatic reaction is not dihydrodipicolinate but in fact (4S)-4-hydroxy-2,3,4,5-tetrahydro-(2S)-dipicolinic acid (HTPA), and that the consecutive dehydration reaction leading to DHDP is not spontaneous but catalyzed by DapB.</text>
</comment>
<name>DAPA_CHLFF</name>
<organism>
    <name type="scientific">Chlamydia felis (strain Fe/C-56)</name>
    <name type="common">Chlamydophila felis</name>
    <dbReference type="NCBI Taxonomy" id="264202"/>
    <lineage>
        <taxon>Bacteria</taxon>
        <taxon>Pseudomonadati</taxon>
        <taxon>Chlamydiota</taxon>
        <taxon>Chlamydiia</taxon>
        <taxon>Chlamydiales</taxon>
        <taxon>Chlamydiaceae</taxon>
        <taxon>Chlamydia/Chlamydophila group</taxon>
        <taxon>Chlamydia</taxon>
    </lineage>
</organism>
<accession>Q255G0</accession>
<dbReference type="EC" id="4.3.3.7" evidence="1"/>
<dbReference type="EMBL" id="AP006861">
    <property type="protein sequence ID" value="BAE81078.1"/>
    <property type="molecule type" value="Genomic_DNA"/>
</dbReference>
<dbReference type="RefSeq" id="WP_011457859.1">
    <property type="nucleotide sequence ID" value="NC_007899.1"/>
</dbReference>
<dbReference type="SMR" id="Q255G0"/>
<dbReference type="STRING" id="264202.CF0306"/>
<dbReference type="KEGG" id="cfe:CF0306"/>
<dbReference type="eggNOG" id="COG0329">
    <property type="taxonomic scope" value="Bacteria"/>
</dbReference>
<dbReference type="HOGENOM" id="CLU_049343_7_0_0"/>
<dbReference type="OrthoDB" id="9782828at2"/>
<dbReference type="UniPathway" id="UPA00034">
    <property type="reaction ID" value="UER00017"/>
</dbReference>
<dbReference type="Proteomes" id="UP000001260">
    <property type="component" value="Chromosome"/>
</dbReference>
<dbReference type="GO" id="GO:0005829">
    <property type="term" value="C:cytosol"/>
    <property type="evidence" value="ECO:0007669"/>
    <property type="project" value="TreeGrafter"/>
</dbReference>
<dbReference type="GO" id="GO:0008840">
    <property type="term" value="F:4-hydroxy-tetrahydrodipicolinate synthase activity"/>
    <property type="evidence" value="ECO:0007669"/>
    <property type="project" value="UniProtKB-UniRule"/>
</dbReference>
<dbReference type="GO" id="GO:0019877">
    <property type="term" value="P:diaminopimelate biosynthetic process"/>
    <property type="evidence" value="ECO:0007669"/>
    <property type="project" value="UniProtKB-UniRule"/>
</dbReference>
<dbReference type="GO" id="GO:0009089">
    <property type="term" value="P:lysine biosynthetic process via diaminopimelate"/>
    <property type="evidence" value="ECO:0007669"/>
    <property type="project" value="UniProtKB-UniRule"/>
</dbReference>
<dbReference type="Gene3D" id="3.20.20.70">
    <property type="entry name" value="Aldolase class I"/>
    <property type="match status" value="1"/>
</dbReference>
<dbReference type="HAMAP" id="MF_00418">
    <property type="entry name" value="DapA"/>
    <property type="match status" value="1"/>
</dbReference>
<dbReference type="InterPro" id="IPR013785">
    <property type="entry name" value="Aldolase_TIM"/>
</dbReference>
<dbReference type="InterPro" id="IPR005263">
    <property type="entry name" value="DapA"/>
</dbReference>
<dbReference type="InterPro" id="IPR002220">
    <property type="entry name" value="DapA-like"/>
</dbReference>
<dbReference type="InterPro" id="IPR020625">
    <property type="entry name" value="Schiff_base-form_aldolases_AS"/>
</dbReference>
<dbReference type="InterPro" id="IPR020624">
    <property type="entry name" value="Schiff_base-form_aldolases_CS"/>
</dbReference>
<dbReference type="NCBIfam" id="TIGR00674">
    <property type="entry name" value="dapA"/>
    <property type="match status" value="1"/>
</dbReference>
<dbReference type="PANTHER" id="PTHR12128:SF66">
    <property type="entry name" value="4-HYDROXY-2-OXOGLUTARATE ALDOLASE, MITOCHONDRIAL"/>
    <property type="match status" value="1"/>
</dbReference>
<dbReference type="PANTHER" id="PTHR12128">
    <property type="entry name" value="DIHYDRODIPICOLINATE SYNTHASE"/>
    <property type="match status" value="1"/>
</dbReference>
<dbReference type="Pfam" id="PF00701">
    <property type="entry name" value="DHDPS"/>
    <property type="match status" value="1"/>
</dbReference>
<dbReference type="PIRSF" id="PIRSF001365">
    <property type="entry name" value="DHDPS"/>
    <property type="match status" value="1"/>
</dbReference>
<dbReference type="PRINTS" id="PR00146">
    <property type="entry name" value="DHPICSNTHASE"/>
</dbReference>
<dbReference type="SMART" id="SM01130">
    <property type="entry name" value="DHDPS"/>
    <property type="match status" value="1"/>
</dbReference>
<dbReference type="SUPFAM" id="SSF51569">
    <property type="entry name" value="Aldolase"/>
    <property type="match status" value="1"/>
</dbReference>
<dbReference type="PROSITE" id="PS00665">
    <property type="entry name" value="DHDPS_1"/>
    <property type="match status" value="1"/>
</dbReference>
<dbReference type="PROSITE" id="PS00666">
    <property type="entry name" value="DHDPS_2"/>
    <property type="match status" value="1"/>
</dbReference>
<proteinExistence type="inferred from homology"/>
<gene>
    <name evidence="1" type="primary">dapA</name>
    <name type="ordered locus">CF0306</name>
</gene>
<protein>
    <recommendedName>
        <fullName evidence="1">4-hydroxy-tetrahydrodipicolinate synthase</fullName>
        <shortName evidence="1">HTPA synthase</shortName>
        <ecNumber evidence="1">4.3.3.7</ecNumber>
    </recommendedName>
</protein>
<keyword id="KW-0028">Amino-acid biosynthesis</keyword>
<keyword id="KW-0963">Cytoplasm</keyword>
<keyword id="KW-0220">Diaminopimelate biosynthesis</keyword>
<keyword id="KW-0456">Lyase</keyword>
<keyword id="KW-0457">Lysine biosynthesis</keyword>
<keyword id="KW-0704">Schiff base</keyword>